<proteinExistence type="inferred from homology"/>
<dbReference type="EMBL" id="CP000414">
    <property type="protein sequence ID" value="ABJ62593.1"/>
    <property type="molecule type" value="Genomic_DNA"/>
</dbReference>
<dbReference type="RefSeq" id="WP_002815203.1">
    <property type="nucleotide sequence ID" value="NC_008531.1"/>
</dbReference>
<dbReference type="SMR" id="Q03W29"/>
<dbReference type="EnsemblBacteria" id="ABJ62593">
    <property type="protein sequence ID" value="ABJ62593"/>
    <property type="gene ID" value="LEUM_1501"/>
</dbReference>
<dbReference type="GeneID" id="97503531"/>
<dbReference type="KEGG" id="lme:LEUM_1501"/>
<dbReference type="eggNOG" id="COG2001">
    <property type="taxonomic scope" value="Bacteria"/>
</dbReference>
<dbReference type="HOGENOM" id="CLU_107907_0_5_9"/>
<dbReference type="Proteomes" id="UP000000362">
    <property type="component" value="Chromosome"/>
</dbReference>
<dbReference type="GO" id="GO:0005737">
    <property type="term" value="C:cytoplasm"/>
    <property type="evidence" value="ECO:0007669"/>
    <property type="project" value="UniProtKB-UniRule"/>
</dbReference>
<dbReference type="GO" id="GO:0009295">
    <property type="term" value="C:nucleoid"/>
    <property type="evidence" value="ECO:0007669"/>
    <property type="project" value="UniProtKB-SubCell"/>
</dbReference>
<dbReference type="GO" id="GO:0003700">
    <property type="term" value="F:DNA-binding transcription factor activity"/>
    <property type="evidence" value="ECO:0007669"/>
    <property type="project" value="UniProtKB-UniRule"/>
</dbReference>
<dbReference type="GO" id="GO:0000976">
    <property type="term" value="F:transcription cis-regulatory region binding"/>
    <property type="evidence" value="ECO:0007669"/>
    <property type="project" value="TreeGrafter"/>
</dbReference>
<dbReference type="GO" id="GO:2000143">
    <property type="term" value="P:negative regulation of DNA-templated transcription initiation"/>
    <property type="evidence" value="ECO:0007669"/>
    <property type="project" value="TreeGrafter"/>
</dbReference>
<dbReference type="CDD" id="cd16321">
    <property type="entry name" value="MraZ_C"/>
    <property type="match status" value="1"/>
</dbReference>
<dbReference type="CDD" id="cd16320">
    <property type="entry name" value="MraZ_N"/>
    <property type="match status" value="1"/>
</dbReference>
<dbReference type="FunFam" id="3.40.1550.20:FF:000002">
    <property type="entry name" value="Transcriptional regulator MraZ"/>
    <property type="match status" value="1"/>
</dbReference>
<dbReference type="Gene3D" id="3.40.1550.20">
    <property type="entry name" value="Transcriptional regulator MraZ domain"/>
    <property type="match status" value="1"/>
</dbReference>
<dbReference type="HAMAP" id="MF_01008">
    <property type="entry name" value="MraZ"/>
    <property type="match status" value="1"/>
</dbReference>
<dbReference type="InterPro" id="IPR003444">
    <property type="entry name" value="MraZ"/>
</dbReference>
<dbReference type="InterPro" id="IPR035644">
    <property type="entry name" value="MraZ_C"/>
</dbReference>
<dbReference type="InterPro" id="IPR020603">
    <property type="entry name" value="MraZ_dom"/>
</dbReference>
<dbReference type="InterPro" id="IPR035642">
    <property type="entry name" value="MraZ_N"/>
</dbReference>
<dbReference type="InterPro" id="IPR038619">
    <property type="entry name" value="MraZ_sf"/>
</dbReference>
<dbReference type="InterPro" id="IPR007159">
    <property type="entry name" value="SpoVT-AbrB_dom"/>
</dbReference>
<dbReference type="InterPro" id="IPR037914">
    <property type="entry name" value="SpoVT-AbrB_sf"/>
</dbReference>
<dbReference type="NCBIfam" id="TIGR00242">
    <property type="entry name" value="division/cell wall cluster transcriptional repressor MraZ"/>
    <property type="match status" value="1"/>
</dbReference>
<dbReference type="PANTHER" id="PTHR34701">
    <property type="entry name" value="TRANSCRIPTIONAL REGULATOR MRAZ"/>
    <property type="match status" value="1"/>
</dbReference>
<dbReference type="PANTHER" id="PTHR34701:SF1">
    <property type="entry name" value="TRANSCRIPTIONAL REGULATOR MRAZ"/>
    <property type="match status" value="1"/>
</dbReference>
<dbReference type="Pfam" id="PF02381">
    <property type="entry name" value="MraZ"/>
    <property type="match status" value="2"/>
</dbReference>
<dbReference type="SUPFAM" id="SSF89447">
    <property type="entry name" value="AbrB/MazE/MraZ-like"/>
    <property type="match status" value="1"/>
</dbReference>
<dbReference type="PROSITE" id="PS51740">
    <property type="entry name" value="SPOVT_ABRB"/>
    <property type="match status" value="2"/>
</dbReference>
<gene>
    <name evidence="1" type="primary">mraZ</name>
    <name type="ordered locus">LEUM_1501</name>
</gene>
<sequence>MFMGEYSHTLDTKSRLIIPAKFRNQLGDQFIITKWMEKSLRAMPMAVWEKLQEQLNQLPLGKKDARAFRRFVMAGALEAEFDKQGRIVVPNNLREYASLEKSVVVTGVGDSFEIWSAENWSAYTAETADDFDNIAEGLVDFDL</sequence>
<protein>
    <recommendedName>
        <fullName>Transcriptional regulator MraZ</fullName>
    </recommendedName>
</protein>
<keyword id="KW-0963">Cytoplasm</keyword>
<keyword id="KW-0238">DNA-binding</keyword>
<keyword id="KW-1185">Reference proteome</keyword>
<keyword id="KW-0677">Repeat</keyword>
<keyword id="KW-0804">Transcription</keyword>
<keyword id="KW-0805">Transcription regulation</keyword>
<feature type="chain" id="PRO_1000062893" description="Transcriptional regulator MraZ">
    <location>
        <begin position="1"/>
        <end position="143"/>
    </location>
</feature>
<feature type="domain" description="SpoVT-AbrB 1" evidence="2">
    <location>
        <begin position="5"/>
        <end position="47"/>
    </location>
</feature>
<feature type="domain" description="SpoVT-AbrB 2" evidence="2">
    <location>
        <begin position="76"/>
        <end position="119"/>
    </location>
</feature>
<reference key="1">
    <citation type="journal article" date="2006" name="Proc. Natl. Acad. Sci. U.S.A.">
        <title>Comparative genomics of the lactic acid bacteria.</title>
        <authorList>
            <person name="Makarova K.S."/>
            <person name="Slesarev A."/>
            <person name="Wolf Y.I."/>
            <person name="Sorokin A."/>
            <person name="Mirkin B."/>
            <person name="Koonin E.V."/>
            <person name="Pavlov A."/>
            <person name="Pavlova N."/>
            <person name="Karamychev V."/>
            <person name="Polouchine N."/>
            <person name="Shakhova V."/>
            <person name="Grigoriev I."/>
            <person name="Lou Y."/>
            <person name="Rohksar D."/>
            <person name="Lucas S."/>
            <person name="Huang K."/>
            <person name="Goodstein D.M."/>
            <person name="Hawkins T."/>
            <person name="Plengvidhya V."/>
            <person name="Welker D."/>
            <person name="Hughes J."/>
            <person name="Goh Y."/>
            <person name="Benson A."/>
            <person name="Baldwin K."/>
            <person name="Lee J.-H."/>
            <person name="Diaz-Muniz I."/>
            <person name="Dosti B."/>
            <person name="Smeianov V."/>
            <person name="Wechter W."/>
            <person name="Barabote R."/>
            <person name="Lorca G."/>
            <person name="Altermann E."/>
            <person name="Barrangou R."/>
            <person name="Ganesan B."/>
            <person name="Xie Y."/>
            <person name="Rawsthorne H."/>
            <person name="Tamir D."/>
            <person name="Parker C."/>
            <person name="Breidt F."/>
            <person name="Broadbent J.R."/>
            <person name="Hutkins R."/>
            <person name="O'Sullivan D."/>
            <person name="Steele J."/>
            <person name="Unlu G."/>
            <person name="Saier M.H. Jr."/>
            <person name="Klaenhammer T."/>
            <person name="Richardson P."/>
            <person name="Kozyavkin S."/>
            <person name="Weimer B.C."/>
            <person name="Mills D.A."/>
        </authorList>
    </citation>
    <scope>NUCLEOTIDE SEQUENCE [LARGE SCALE GENOMIC DNA]</scope>
    <source>
        <strain>ATCC 8293 / DSM 20343 / BCRC 11652 / CCM 1803 / JCM 6124 / NCDO 523 / NBRC 100496 / NCIMB 8023 / NCTC 12954 / NRRL B-1118 / 37Y</strain>
    </source>
</reference>
<comment type="subunit">
    <text evidence="1">Forms oligomers.</text>
</comment>
<comment type="subcellular location">
    <subcellularLocation>
        <location evidence="1">Cytoplasm</location>
        <location evidence="1">Nucleoid</location>
    </subcellularLocation>
</comment>
<comment type="similarity">
    <text evidence="1">Belongs to the MraZ family.</text>
</comment>
<organism>
    <name type="scientific">Leuconostoc mesenteroides subsp. mesenteroides (strain ATCC 8293 / DSM 20343 / BCRC 11652 / CCM 1803 / JCM 6124 / NCDO 523 / NBRC 100496 / NCIMB 8023 / NCTC 12954 / NRRL B-1118 / 37Y)</name>
    <dbReference type="NCBI Taxonomy" id="203120"/>
    <lineage>
        <taxon>Bacteria</taxon>
        <taxon>Bacillati</taxon>
        <taxon>Bacillota</taxon>
        <taxon>Bacilli</taxon>
        <taxon>Lactobacillales</taxon>
        <taxon>Lactobacillaceae</taxon>
        <taxon>Leuconostoc</taxon>
    </lineage>
</organism>
<name>MRAZ_LEUMM</name>
<evidence type="ECO:0000255" key="1">
    <source>
        <dbReference type="HAMAP-Rule" id="MF_01008"/>
    </source>
</evidence>
<evidence type="ECO:0000255" key="2">
    <source>
        <dbReference type="PROSITE-ProRule" id="PRU01076"/>
    </source>
</evidence>
<accession>Q03W29</accession>